<protein>
    <recommendedName>
        <fullName evidence="1">Uracil-DNA glycosylase</fullName>
        <shortName evidence="1">UDG</shortName>
        <ecNumber evidence="1">3.2.2.27</ecNumber>
    </recommendedName>
</protein>
<feature type="chain" id="PRO_1000009878" description="Uracil-DNA glycosylase">
    <location>
        <begin position="1"/>
        <end position="229"/>
    </location>
</feature>
<feature type="active site" description="Proton acceptor" evidence="1">
    <location>
        <position position="70"/>
    </location>
</feature>
<gene>
    <name evidence="1" type="primary">ung</name>
    <name type="ordered locus">CTA_0660</name>
</gene>
<sequence length="229" mass="26002">MHEAFTIEQLPPSWQEQLKDEWSQPYWSQLLAFLKSEYAQATIYPKKENVFAALQSTPFDQVRVVILGQDPYHGEGQAHGLSFSVPRGQALPPSLRNIFQELHTDLGIRNESGCLQAWADQGVLLLNTVLTVRAGEAFSHAGRGWERFTDAIVTKLIQNRTHVIFVLWGNAARQKCNLLFQTKHQHAVLACPHPSPLAAHRGFFGCCHFSKINYLLKKQGKTMINWKIE</sequence>
<proteinExistence type="inferred from homology"/>
<reference key="1">
    <citation type="journal article" date="2005" name="Infect. Immun.">
        <title>Comparative genomic analysis of Chlamydia trachomatis oculotropic and genitotropic strains.</title>
        <authorList>
            <person name="Carlson J.H."/>
            <person name="Porcella S.F."/>
            <person name="McClarty G."/>
            <person name="Caldwell H.D."/>
        </authorList>
    </citation>
    <scope>NUCLEOTIDE SEQUENCE [LARGE SCALE GENOMIC DNA]</scope>
    <source>
        <strain>ATCC VR-571B / DSM 19440 / HAR-13</strain>
    </source>
</reference>
<organism>
    <name type="scientific">Chlamydia trachomatis serovar A (strain ATCC VR-571B / DSM 19440 / HAR-13)</name>
    <dbReference type="NCBI Taxonomy" id="315277"/>
    <lineage>
        <taxon>Bacteria</taxon>
        <taxon>Pseudomonadati</taxon>
        <taxon>Chlamydiota</taxon>
        <taxon>Chlamydiia</taxon>
        <taxon>Chlamydiales</taxon>
        <taxon>Chlamydiaceae</taxon>
        <taxon>Chlamydia/Chlamydophila group</taxon>
        <taxon>Chlamydia</taxon>
    </lineage>
</organism>
<name>UNG_CHLTA</name>
<keyword id="KW-0963">Cytoplasm</keyword>
<keyword id="KW-0227">DNA damage</keyword>
<keyword id="KW-0234">DNA repair</keyword>
<keyword id="KW-0378">Hydrolase</keyword>
<comment type="function">
    <text evidence="1">Excises uracil residues from the DNA which can arise as a result of misincorporation of dUMP residues by DNA polymerase or due to deamination of cytosine.</text>
</comment>
<comment type="catalytic activity">
    <reaction evidence="1">
        <text>Hydrolyzes single-stranded DNA or mismatched double-stranded DNA and polynucleotides, releasing free uracil.</text>
        <dbReference type="EC" id="3.2.2.27"/>
    </reaction>
</comment>
<comment type="subcellular location">
    <subcellularLocation>
        <location evidence="1">Cytoplasm</location>
    </subcellularLocation>
</comment>
<comment type="similarity">
    <text evidence="1">Belongs to the uracil-DNA glycosylase (UDG) superfamily. UNG family.</text>
</comment>
<evidence type="ECO:0000255" key="1">
    <source>
        <dbReference type="HAMAP-Rule" id="MF_00148"/>
    </source>
</evidence>
<dbReference type="EC" id="3.2.2.27" evidence="1"/>
<dbReference type="EMBL" id="CP000051">
    <property type="protein sequence ID" value="AAX50884.1"/>
    <property type="molecule type" value="Genomic_DNA"/>
</dbReference>
<dbReference type="RefSeq" id="WP_009871975.1">
    <property type="nucleotide sequence ID" value="NC_007429.1"/>
</dbReference>
<dbReference type="SMR" id="Q3KL88"/>
<dbReference type="KEGG" id="cta:CTA_0660"/>
<dbReference type="HOGENOM" id="CLU_032162_3_0_0"/>
<dbReference type="Proteomes" id="UP000002532">
    <property type="component" value="Chromosome"/>
</dbReference>
<dbReference type="GO" id="GO:0005737">
    <property type="term" value="C:cytoplasm"/>
    <property type="evidence" value="ECO:0007669"/>
    <property type="project" value="UniProtKB-SubCell"/>
</dbReference>
<dbReference type="GO" id="GO:0004844">
    <property type="term" value="F:uracil DNA N-glycosylase activity"/>
    <property type="evidence" value="ECO:0007669"/>
    <property type="project" value="UniProtKB-UniRule"/>
</dbReference>
<dbReference type="GO" id="GO:0097510">
    <property type="term" value="P:base-excision repair, AP site formation via deaminated base removal"/>
    <property type="evidence" value="ECO:0007669"/>
    <property type="project" value="TreeGrafter"/>
</dbReference>
<dbReference type="CDD" id="cd10027">
    <property type="entry name" value="UDG-F1-like"/>
    <property type="match status" value="1"/>
</dbReference>
<dbReference type="FunFam" id="3.40.470.10:FF:000008">
    <property type="entry name" value="Uracil-DNA glycosylase"/>
    <property type="match status" value="1"/>
</dbReference>
<dbReference type="Gene3D" id="3.40.470.10">
    <property type="entry name" value="Uracil-DNA glycosylase-like domain"/>
    <property type="match status" value="1"/>
</dbReference>
<dbReference type="HAMAP" id="MF_00148">
    <property type="entry name" value="UDG"/>
    <property type="match status" value="1"/>
</dbReference>
<dbReference type="InterPro" id="IPR002043">
    <property type="entry name" value="UDG_fam1"/>
</dbReference>
<dbReference type="InterPro" id="IPR018085">
    <property type="entry name" value="Ura-DNA_Glyclase_AS"/>
</dbReference>
<dbReference type="InterPro" id="IPR005122">
    <property type="entry name" value="Uracil-DNA_glycosylase-like"/>
</dbReference>
<dbReference type="InterPro" id="IPR036895">
    <property type="entry name" value="Uracil-DNA_glycosylase-like_sf"/>
</dbReference>
<dbReference type="NCBIfam" id="NF003588">
    <property type="entry name" value="PRK05254.1-1"/>
    <property type="match status" value="1"/>
</dbReference>
<dbReference type="NCBIfam" id="NF003589">
    <property type="entry name" value="PRK05254.1-2"/>
    <property type="match status" value="1"/>
</dbReference>
<dbReference type="NCBIfam" id="NF003591">
    <property type="entry name" value="PRK05254.1-4"/>
    <property type="match status" value="1"/>
</dbReference>
<dbReference type="NCBIfam" id="NF003592">
    <property type="entry name" value="PRK05254.1-5"/>
    <property type="match status" value="1"/>
</dbReference>
<dbReference type="NCBIfam" id="TIGR00628">
    <property type="entry name" value="ung"/>
    <property type="match status" value="1"/>
</dbReference>
<dbReference type="PANTHER" id="PTHR11264">
    <property type="entry name" value="URACIL-DNA GLYCOSYLASE"/>
    <property type="match status" value="1"/>
</dbReference>
<dbReference type="PANTHER" id="PTHR11264:SF0">
    <property type="entry name" value="URACIL-DNA GLYCOSYLASE"/>
    <property type="match status" value="1"/>
</dbReference>
<dbReference type="Pfam" id="PF03167">
    <property type="entry name" value="UDG"/>
    <property type="match status" value="1"/>
</dbReference>
<dbReference type="SMART" id="SM00986">
    <property type="entry name" value="UDG"/>
    <property type="match status" value="1"/>
</dbReference>
<dbReference type="SMART" id="SM00987">
    <property type="entry name" value="UreE_C"/>
    <property type="match status" value="1"/>
</dbReference>
<dbReference type="SUPFAM" id="SSF52141">
    <property type="entry name" value="Uracil-DNA glycosylase-like"/>
    <property type="match status" value="1"/>
</dbReference>
<dbReference type="PROSITE" id="PS00130">
    <property type="entry name" value="U_DNA_GLYCOSYLASE"/>
    <property type="match status" value="1"/>
</dbReference>
<accession>Q3KL88</accession>